<keyword id="KW-1185">Reference proteome</keyword>
<comment type="similarity">
    <text evidence="1">Belongs to the UPF0178 family.</text>
</comment>
<organism>
    <name type="scientific">Geobacter sulfurreducens (strain ATCC 51573 / DSM 12127 / PCA)</name>
    <dbReference type="NCBI Taxonomy" id="243231"/>
    <lineage>
        <taxon>Bacteria</taxon>
        <taxon>Pseudomonadati</taxon>
        <taxon>Thermodesulfobacteriota</taxon>
        <taxon>Desulfuromonadia</taxon>
        <taxon>Geobacterales</taxon>
        <taxon>Geobacteraceae</taxon>
        <taxon>Geobacter</taxon>
    </lineage>
</organism>
<evidence type="ECO:0000255" key="1">
    <source>
        <dbReference type="HAMAP-Rule" id="MF_00489"/>
    </source>
</evidence>
<accession>Q74GS4</accession>
<reference key="1">
    <citation type="journal article" date="2003" name="Science">
        <title>Genome of Geobacter sulfurreducens: metal reduction in subsurface environments.</title>
        <authorList>
            <person name="Methe B.A."/>
            <person name="Nelson K.E."/>
            <person name="Eisen J.A."/>
            <person name="Paulsen I.T."/>
            <person name="Nelson W.C."/>
            <person name="Heidelberg J.F."/>
            <person name="Wu D."/>
            <person name="Wu M."/>
            <person name="Ward N.L."/>
            <person name="Beanan M.J."/>
            <person name="Dodson R.J."/>
            <person name="Madupu R."/>
            <person name="Brinkac L.M."/>
            <person name="Daugherty S.C."/>
            <person name="DeBoy R.T."/>
            <person name="Durkin A.S."/>
            <person name="Gwinn M.L."/>
            <person name="Kolonay J.F."/>
            <person name="Sullivan S.A."/>
            <person name="Haft D.H."/>
            <person name="Selengut J."/>
            <person name="Davidsen T.M."/>
            <person name="Zafar N."/>
            <person name="White O."/>
            <person name="Tran B."/>
            <person name="Romero C."/>
            <person name="Forberger H.A."/>
            <person name="Weidman J.F."/>
            <person name="Khouri H.M."/>
            <person name="Feldblyum T.V."/>
            <person name="Utterback T.R."/>
            <person name="Van Aken S.E."/>
            <person name="Lovley D.R."/>
            <person name="Fraser C.M."/>
        </authorList>
    </citation>
    <scope>NUCLEOTIDE SEQUENCE [LARGE SCALE GENOMIC DNA]</scope>
    <source>
        <strain>ATCC 51573 / DSM 12127 / PCA</strain>
    </source>
</reference>
<protein>
    <recommendedName>
        <fullName evidence="1">UPF0178 protein GSU0171</fullName>
    </recommendedName>
</protein>
<gene>
    <name type="ordered locus">GSU0171</name>
</gene>
<name>Y171_GEOSL</name>
<sequence length="151" mass="16367">MKIWIDADACPRAVKEILFRASTRLRVPLCLVANRSLAKHAGPLVESVVVADGFDVADDYIAEHAAPTDLVVTADVPLAARIVAKGGVALDPRGELYSEESIGERLAMRDLLSELRDTGMIQGGGPAPFSMSDRNRFASALDSLLHRMLRR</sequence>
<feature type="chain" id="PRO_0000175982" description="UPF0178 protein GSU0171">
    <location>
        <begin position="1"/>
        <end position="151"/>
    </location>
</feature>
<dbReference type="EMBL" id="AE017180">
    <property type="protein sequence ID" value="AAR33506.1"/>
    <property type="molecule type" value="Genomic_DNA"/>
</dbReference>
<dbReference type="RefSeq" id="NP_951233.1">
    <property type="nucleotide sequence ID" value="NC_002939.5"/>
</dbReference>
<dbReference type="RefSeq" id="WP_010940846.1">
    <property type="nucleotide sequence ID" value="NC_002939.5"/>
</dbReference>
<dbReference type="FunCoup" id="Q74GS4">
    <property type="interactions" value="39"/>
</dbReference>
<dbReference type="STRING" id="243231.GSU0171"/>
<dbReference type="EnsemblBacteria" id="AAR33506">
    <property type="protein sequence ID" value="AAR33506"/>
    <property type="gene ID" value="GSU0171"/>
</dbReference>
<dbReference type="KEGG" id="gsu:GSU0171"/>
<dbReference type="PATRIC" id="fig|243231.5.peg.170"/>
<dbReference type="eggNOG" id="COG1671">
    <property type="taxonomic scope" value="Bacteria"/>
</dbReference>
<dbReference type="HOGENOM" id="CLU_106619_2_1_7"/>
<dbReference type="InParanoid" id="Q74GS4"/>
<dbReference type="OrthoDB" id="9798918at2"/>
<dbReference type="Proteomes" id="UP000000577">
    <property type="component" value="Chromosome"/>
</dbReference>
<dbReference type="CDD" id="cd18720">
    <property type="entry name" value="PIN_YqxD-like"/>
    <property type="match status" value="1"/>
</dbReference>
<dbReference type="HAMAP" id="MF_00489">
    <property type="entry name" value="UPF0178"/>
    <property type="match status" value="1"/>
</dbReference>
<dbReference type="InterPro" id="IPR003791">
    <property type="entry name" value="UPF0178"/>
</dbReference>
<dbReference type="NCBIfam" id="NF001095">
    <property type="entry name" value="PRK00124.1"/>
    <property type="match status" value="1"/>
</dbReference>
<dbReference type="PANTHER" id="PTHR35146">
    <property type="entry name" value="UPF0178 PROTEIN YAII"/>
    <property type="match status" value="1"/>
</dbReference>
<dbReference type="PANTHER" id="PTHR35146:SF1">
    <property type="entry name" value="UPF0178 PROTEIN YAII"/>
    <property type="match status" value="1"/>
</dbReference>
<dbReference type="Pfam" id="PF02639">
    <property type="entry name" value="DUF188"/>
    <property type="match status" value="1"/>
</dbReference>
<proteinExistence type="inferred from homology"/>